<name>CYSM_HELPJ</name>
<keyword id="KW-0028">Amino-acid biosynthesis</keyword>
<keyword id="KW-0198">Cysteine biosynthesis</keyword>
<keyword id="KW-0663">Pyridoxal phosphate</keyword>
<keyword id="KW-0808">Transferase</keyword>
<feature type="chain" id="PRO_0000167111" description="Cysteine synthase">
    <location>
        <begin position="1"/>
        <end position="305"/>
    </location>
</feature>
<feature type="binding site" evidence="1">
    <location>
        <position position="75"/>
    </location>
    <ligand>
        <name>pyridoxal 5'-phosphate</name>
        <dbReference type="ChEBI" id="CHEBI:597326"/>
    </ligand>
</feature>
<feature type="binding site" evidence="1">
    <location>
        <begin position="179"/>
        <end position="183"/>
    </location>
    <ligand>
        <name>pyridoxal 5'-phosphate</name>
        <dbReference type="ChEBI" id="CHEBI:597326"/>
    </ligand>
</feature>
<feature type="binding site" evidence="1">
    <location>
        <position position="266"/>
    </location>
    <ligand>
        <name>pyridoxal 5'-phosphate</name>
        <dbReference type="ChEBI" id="CHEBI:597326"/>
    </ligand>
</feature>
<feature type="modified residue" description="N6-(pyridoxal phosphate)lysine" evidence="1">
    <location>
        <position position="45"/>
    </location>
</feature>
<dbReference type="EC" id="2.5.1.47"/>
<dbReference type="EMBL" id="AE001439">
    <property type="protein sequence ID" value="AAD05678.1"/>
    <property type="molecule type" value="Genomic_DNA"/>
</dbReference>
<dbReference type="PIR" id="E71973">
    <property type="entry name" value="E71973"/>
</dbReference>
<dbReference type="RefSeq" id="WP_000603993.1">
    <property type="nucleotide sequence ID" value="NC_000921.1"/>
</dbReference>
<dbReference type="SMR" id="Q9ZMW6"/>
<dbReference type="KEGG" id="hpj:jhp_0099"/>
<dbReference type="eggNOG" id="COG0031">
    <property type="taxonomic scope" value="Bacteria"/>
</dbReference>
<dbReference type="UniPathway" id="UPA00136">
    <property type="reaction ID" value="UER00200"/>
</dbReference>
<dbReference type="Proteomes" id="UP000000804">
    <property type="component" value="Chromosome"/>
</dbReference>
<dbReference type="GO" id="GO:0004124">
    <property type="term" value="F:cysteine synthase activity"/>
    <property type="evidence" value="ECO:0007669"/>
    <property type="project" value="UniProtKB-EC"/>
</dbReference>
<dbReference type="GO" id="GO:0006535">
    <property type="term" value="P:cysteine biosynthetic process from serine"/>
    <property type="evidence" value="ECO:0007669"/>
    <property type="project" value="InterPro"/>
</dbReference>
<dbReference type="CDD" id="cd01561">
    <property type="entry name" value="CBS_like"/>
    <property type="match status" value="1"/>
</dbReference>
<dbReference type="FunFam" id="3.40.50.1100:FF:000016">
    <property type="entry name" value="Cysteine synthase A"/>
    <property type="match status" value="1"/>
</dbReference>
<dbReference type="FunFam" id="3.40.50.1100:FF:000118">
    <property type="entry name" value="Related to CYS4-cystathionine beta-synthase"/>
    <property type="match status" value="1"/>
</dbReference>
<dbReference type="Gene3D" id="3.40.50.1100">
    <property type="match status" value="2"/>
</dbReference>
<dbReference type="InterPro" id="IPR050214">
    <property type="entry name" value="Cys_Synth/Cystath_Beta-Synth"/>
</dbReference>
<dbReference type="InterPro" id="IPR001216">
    <property type="entry name" value="P-phosphate_BS"/>
</dbReference>
<dbReference type="InterPro" id="IPR001926">
    <property type="entry name" value="TrpB-like_PALP"/>
</dbReference>
<dbReference type="InterPro" id="IPR036052">
    <property type="entry name" value="TrpB-like_PALP_sf"/>
</dbReference>
<dbReference type="PANTHER" id="PTHR10314">
    <property type="entry name" value="CYSTATHIONINE BETA-SYNTHASE"/>
    <property type="match status" value="1"/>
</dbReference>
<dbReference type="Pfam" id="PF00291">
    <property type="entry name" value="PALP"/>
    <property type="match status" value="1"/>
</dbReference>
<dbReference type="SUPFAM" id="SSF53686">
    <property type="entry name" value="Tryptophan synthase beta subunit-like PLP-dependent enzymes"/>
    <property type="match status" value="1"/>
</dbReference>
<dbReference type="PROSITE" id="PS00901">
    <property type="entry name" value="CYS_SYNTHASE"/>
    <property type="match status" value="1"/>
</dbReference>
<gene>
    <name type="primary">cysM</name>
    <name type="synonym">cysK</name>
    <name type="ordered locus">jhp_0099</name>
</gene>
<organism>
    <name type="scientific">Helicobacter pylori (strain J99 / ATCC 700824)</name>
    <name type="common">Campylobacter pylori J99</name>
    <dbReference type="NCBI Taxonomy" id="85963"/>
    <lineage>
        <taxon>Bacteria</taxon>
        <taxon>Pseudomonadati</taxon>
        <taxon>Campylobacterota</taxon>
        <taxon>Epsilonproteobacteria</taxon>
        <taxon>Campylobacterales</taxon>
        <taxon>Helicobacteraceae</taxon>
        <taxon>Helicobacter</taxon>
    </lineage>
</organism>
<protein>
    <recommendedName>
        <fullName>Cysteine synthase</fullName>
        <shortName>CSase</shortName>
        <ecNumber>2.5.1.47</ecNumber>
    </recommendedName>
    <alternativeName>
        <fullName>O-acetylserine (thiol)-lyase</fullName>
        <shortName>OAS-TL</shortName>
    </alternativeName>
    <alternativeName>
        <fullName>O-acetylserine sulfhydrylase</fullName>
    </alternativeName>
</protein>
<comment type="catalytic activity">
    <reaction>
        <text>O-acetyl-L-serine + hydrogen sulfide = L-cysteine + acetate</text>
        <dbReference type="Rhea" id="RHEA:14829"/>
        <dbReference type="ChEBI" id="CHEBI:29919"/>
        <dbReference type="ChEBI" id="CHEBI:30089"/>
        <dbReference type="ChEBI" id="CHEBI:35235"/>
        <dbReference type="ChEBI" id="CHEBI:58340"/>
        <dbReference type="EC" id="2.5.1.47"/>
    </reaction>
</comment>
<comment type="cofactor">
    <cofactor>
        <name>pyridoxal 5'-phosphate</name>
        <dbReference type="ChEBI" id="CHEBI:597326"/>
    </cofactor>
</comment>
<comment type="pathway">
    <text>Amino-acid biosynthesis; L-cysteine biosynthesis; L-cysteine from L-serine: step 2/2.</text>
</comment>
<comment type="subunit">
    <text evidence="1">Homodimer.</text>
</comment>
<comment type="similarity">
    <text evidence="2">Belongs to the cysteine synthase/cystathionine beta-synthase family.</text>
</comment>
<accession>Q9ZMW6</accession>
<sequence>MILTAMQDAIGRTPIFKFTRKDYPIPLKSAIYAKLEHLNPGGSVKDRLGQYLIKEAFRTRKITSTTTIIEPTAGNTGIALALVAIKHHLKTIFVVPKKFSTEKQQIMRALGALVINTPTSEGISGAIKKSKELAESIPDSYLPLQFENPDNPAAYYHTLAPEIVQELGTNLTSFVAGIGSGGTFAGMAKYLKERIPNIRLIGVEPEGSILNGGEPGPHEIEGIGVEFIPPFFANLDIDRFETISDEEGFSYTRKLAKKNGLLVGSSSGAAFAAALKEVQRLPEGSQVLTIFPDMADRYLSKGIYS</sequence>
<reference key="1">
    <citation type="journal article" date="1999" name="Nature">
        <title>Genomic sequence comparison of two unrelated isolates of the human gastric pathogen Helicobacter pylori.</title>
        <authorList>
            <person name="Alm R.A."/>
            <person name="Ling L.-S.L."/>
            <person name="Moir D.T."/>
            <person name="King B.L."/>
            <person name="Brown E.D."/>
            <person name="Doig P.C."/>
            <person name="Smith D.R."/>
            <person name="Noonan B."/>
            <person name="Guild B.C."/>
            <person name="deJonge B.L."/>
            <person name="Carmel G."/>
            <person name="Tummino P.J."/>
            <person name="Caruso A."/>
            <person name="Uria-Nickelsen M."/>
            <person name="Mills D.M."/>
            <person name="Ives C."/>
            <person name="Gibson R."/>
            <person name="Merberg D."/>
            <person name="Mills S.D."/>
            <person name="Jiang Q."/>
            <person name="Taylor D.E."/>
            <person name="Vovis G.F."/>
            <person name="Trust T.J."/>
        </authorList>
    </citation>
    <scope>NUCLEOTIDE SEQUENCE [LARGE SCALE GENOMIC DNA]</scope>
    <source>
        <strain>J99 / ATCC 700824</strain>
    </source>
</reference>
<evidence type="ECO:0000250" key="1"/>
<evidence type="ECO:0000305" key="2"/>
<proteinExistence type="inferred from homology"/>